<proteinExistence type="evidence at transcript level"/>
<dbReference type="EC" id="2.7.11.1" evidence="1"/>
<dbReference type="EMBL" id="AY818357">
    <property type="protein sequence ID" value="AAX19940.1"/>
    <property type="molecule type" value="mRNA"/>
</dbReference>
<dbReference type="SMR" id="Q4KTY1"/>
<dbReference type="GO" id="GO:0005524">
    <property type="term" value="F:ATP binding"/>
    <property type="evidence" value="ECO:0007669"/>
    <property type="project" value="UniProtKB-KW"/>
</dbReference>
<dbReference type="GO" id="GO:0106310">
    <property type="term" value="F:protein serine kinase activity"/>
    <property type="evidence" value="ECO:0007669"/>
    <property type="project" value="RHEA"/>
</dbReference>
<dbReference type="GO" id="GO:0004674">
    <property type="term" value="F:protein serine/threonine kinase activity"/>
    <property type="evidence" value="ECO:0007669"/>
    <property type="project" value="UniProtKB-KW"/>
</dbReference>
<dbReference type="CDD" id="cd14087">
    <property type="entry name" value="STKc_PSKH1"/>
    <property type="match status" value="1"/>
</dbReference>
<dbReference type="FunFam" id="1.10.510.10:FF:000026">
    <property type="entry name" value="Calcium/calmodulin-dependent protein kinase type 1"/>
    <property type="match status" value="1"/>
</dbReference>
<dbReference type="Gene3D" id="1.10.510.10">
    <property type="entry name" value="Transferase(Phosphotransferase) domain 1"/>
    <property type="match status" value="1"/>
</dbReference>
<dbReference type="InterPro" id="IPR011009">
    <property type="entry name" value="Kinase-like_dom_sf"/>
</dbReference>
<dbReference type="InterPro" id="IPR000719">
    <property type="entry name" value="Prot_kinase_dom"/>
</dbReference>
<dbReference type="InterPro" id="IPR017441">
    <property type="entry name" value="Protein_kinase_ATP_BS"/>
</dbReference>
<dbReference type="InterPro" id="IPR008271">
    <property type="entry name" value="Ser/Thr_kinase_AS"/>
</dbReference>
<dbReference type="PANTHER" id="PTHR24347">
    <property type="entry name" value="SERINE/THREONINE-PROTEIN KINASE"/>
    <property type="match status" value="1"/>
</dbReference>
<dbReference type="Pfam" id="PF00069">
    <property type="entry name" value="Pkinase"/>
    <property type="match status" value="1"/>
</dbReference>
<dbReference type="SMART" id="SM00220">
    <property type="entry name" value="S_TKc"/>
    <property type="match status" value="1"/>
</dbReference>
<dbReference type="SUPFAM" id="SSF56112">
    <property type="entry name" value="Protein kinase-like (PK-like)"/>
    <property type="match status" value="1"/>
</dbReference>
<dbReference type="PROSITE" id="PS00107">
    <property type="entry name" value="PROTEIN_KINASE_ATP"/>
    <property type="match status" value="1"/>
</dbReference>
<dbReference type="PROSITE" id="PS50011">
    <property type="entry name" value="PROTEIN_KINASE_DOM"/>
    <property type="match status" value="1"/>
</dbReference>
<dbReference type="PROSITE" id="PS00108">
    <property type="entry name" value="PROTEIN_KINASE_ST"/>
    <property type="match status" value="1"/>
</dbReference>
<feature type="chain" id="PRO_0000086170" description="Serine/threonine-protein kinase H1 homolog">
    <location>
        <begin position="1"/>
        <end position="415"/>
    </location>
</feature>
<feature type="domain" description="Protein kinase" evidence="2">
    <location>
        <begin position="80"/>
        <end position="334"/>
    </location>
</feature>
<feature type="region of interest" description="Disordered" evidence="4">
    <location>
        <begin position="1"/>
        <end position="70"/>
    </location>
</feature>
<feature type="region of interest" description="Disordered" evidence="4">
    <location>
        <begin position="353"/>
        <end position="415"/>
    </location>
</feature>
<feature type="compositionally biased region" description="Basic and acidic residues" evidence="4">
    <location>
        <begin position="41"/>
        <end position="50"/>
    </location>
</feature>
<feature type="compositionally biased region" description="Polar residues" evidence="4">
    <location>
        <begin position="353"/>
        <end position="362"/>
    </location>
</feature>
<feature type="compositionally biased region" description="Low complexity" evidence="4">
    <location>
        <begin position="363"/>
        <end position="385"/>
    </location>
</feature>
<feature type="compositionally biased region" description="Basic and acidic residues" evidence="4">
    <location>
        <begin position="386"/>
        <end position="406"/>
    </location>
</feature>
<feature type="active site" description="Proton acceptor" evidence="2 3">
    <location>
        <position position="198"/>
    </location>
</feature>
<feature type="binding site" evidence="2">
    <location>
        <begin position="86"/>
        <end position="94"/>
    </location>
    <ligand>
        <name>ATP</name>
        <dbReference type="ChEBI" id="CHEBI:30616"/>
    </ligand>
</feature>
<feature type="binding site" evidence="2">
    <location>
        <position position="109"/>
    </location>
    <ligand>
        <name>ATP</name>
        <dbReference type="ChEBI" id="CHEBI:30616"/>
    </ligand>
</feature>
<evidence type="ECO:0000250" key="1">
    <source>
        <dbReference type="UniProtKB" id="P11801"/>
    </source>
</evidence>
<evidence type="ECO:0000255" key="2">
    <source>
        <dbReference type="PROSITE-ProRule" id="PRU00159"/>
    </source>
</evidence>
<evidence type="ECO:0000255" key="3">
    <source>
        <dbReference type="PROSITE-ProRule" id="PRU10027"/>
    </source>
</evidence>
<evidence type="ECO:0000256" key="4">
    <source>
        <dbReference type="SAM" id="MobiDB-lite"/>
    </source>
</evidence>
<evidence type="ECO:0000305" key="5"/>
<organism>
    <name type="scientific">Pinctada fucata</name>
    <name type="common">Akoya pearl oyster</name>
    <name type="synonym">Pinctada imbricata fucata</name>
    <dbReference type="NCBI Taxonomy" id="50426"/>
    <lineage>
        <taxon>Eukaryota</taxon>
        <taxon>Metazoa</taxon>
        <taxon>Spiralia</taxon>
        <taxon>Lophotrochozoa</taxon>
        <taxon>Mollusca</taxon>
        <taxon>Bivalvia</taxon>
        <taxon>Autobranchia</taxon>
        <taxon>Pteriomorphia</taxon>
        <taxon>Pterioida</taxon>
        <taxon>Pterioidea</taxon>
        <taxon>Pteriidae</taxon>
        <taxon>Pinctada</taxon>
    </lineage>
</organism>
<reference key="1">
    <citation type="submission" date="2004-11" db="EMBL/GenBank/DDBJ databases">
        <title>Characterization of a novel protein serine kinase from Pinctada fucata.</title>
        <authorList>
            <person name="Dai Y."/>
            <person name="Xie L."/>
            <person name="Xiong X."/>
            <person name="Chen L."/>
            <person name="Fan W."/>
            <person name="Zhang R."/>
        </authorList>
    </citation>
    <scope>NUCLEOTIDE SEQUENCE [MRNA]</scope>
</reference>
<accession>Q4KTY1</accession>
<sequence length="415" mass="47155">MGCMSSKLVPEGPSGNQAVVEVFNNERNKEYNRQNPHQNRGPRDPTKDPKNAGPPPEGQRSNRKVKKYRDKFDPRVTAKYDIKALIGRGNFSKVVRVEHRVTKQPYAIKMIDRVQGKEVFESEVAVLRRVKHSYIIQLIEVFETKDKVYMVMELATGGELFDRIIAKGSFTERDATRVLNMVLDGVKYLHGLGITHRDLKPENLLYYHPGHDSKIMITDFGLSSTRKGPENFMRTTCGTPEYIAPEIIARKPYMCQVDMWAVGVITYILLSGTMPFDDENKTRLYRLILKAKYSYAGEHWKDVSAQAKDFIDKLLVVSPGDRLSAADALKHQWLISNAASSSNKNLHRTISQNLIHRQSTRANSTKSAKSTRSTKSNKSNRSGRSLRSEHRRVMPDEIDELHRDPDVQADLASLG</sequence>
<gene>
    <name type="primary">PSKH1</name>
</gene>
<comment type="catalytic activity">
    <reaction evidence="1">
        <text>L-seryl-[protein] + ATP = O-phospho-L-seryl-[protein] + ADP + H(+)</text>
        <dbReference type="Rhea" id="RHEA:17989"/>
        <dbReference type="Rhea" id="RHEA-COMP:9863"/>
        <dbReference type="Rhea" id="RHEA-COMP:11604"/>
        <dbReference type="ChEBI" id="CHEBI:15378"/>
        <dbReference type="ChEBI" id="CHEBI:29999"/>
        <dbReference type="ChEBI" id="CHEBI:30616"/>
        <dbReference type="ChEBI" id="CHEBI:83421"/>
        <dbReference type="ChEBI" id="CHEBI:456216"/>
        <dbReference type="EC" id="2.7.11.1"/>
    </reaction>
    <physiologicalReaction direction="left-to-right" evidence="1">
        <dbReference type="Rhea" id="RHEA:17990"/>
    </physiologicalReaction>
</comment>
<comment type="catalytic activity">
    <reaction evidence="1">
        <text>L-threonyl-[protein] + ATP = O-phospho-L-threonyl-[protein] + ADP + H(+)</text>
        <dbReference type="Rhea" id="RHEA:46608"/>
        <dbReference type="Rhea" id="RHEA-COMP:11060"/>
        <dbReference type="Rhea" id="RHEA-COMP:11605"/>
        <dbReference type="ChEBI" id="CHEBI:15378"/>
        <dbReference type="ChEBI" id="CHEBI:30013"/>
        <dbReference type="ChEBI" id="CHEBI:30616"/>
        <dbReference type="ChEBI" id="CHEBI:61977"/>
        <dbReference type="ChEBI" id="CHEBI:456216"/>
        <dbReference type="EC" id="2.7.11.1"/>
    </reaction>
    <physiologicalReaction direction="left-to-right" evidence="1">
        <dbReference type="Rhea" id="RHEA:46609"/>
    </physiologicalReaction>
</comment>
<comment type="similarity">
    <text evidence="5">Belongs to the protein kinase superfamily. CAMK Ser/Thr protein kinase family.</text>
</comment>
<name>KPSH1_PINFU</name>
<protein>
    <recommendedName>
        <fullName>Serine/threonine-protein kinase H1 homolog</fullName>
        <ecNumber evidence="1">2.7.11.1</ecNumber>
    </recommendedName>
</protein>
<keyword id="KW-0067">ATP-binding</keyword>
<keyword id="KW-0418">Kinase</keyword>
<keyword id="KW-0547">Nucleotide-binding</keyword>
<keyword id="KW-0723">Serine/threonine-protein kinase</keyword>
<keyword id="KW-0808">Transferase</keyword>